<comment type="function">
    <text evidence="1">Required for rescue of stalled ribosomes mediated by trans-translation. Binds to transfer-messenger RNA (tmRNA), required for stable association of tmRNA with ribosomes. tmRNA and SmpB together mimic tRNA shape, replacing the anticodon stem-loop with SmpB. tmRNA is encoded by the ssrA gene; the 2 termini fold to resemble tRNA(Ala) and it encodes a 'tag peptide', a short internal open reading frame. During trans-translation Ala-aminoacylated tmRNA acts like a tRNA, entering the A-site of stalled ribosomes, displacing the stalled mRNA. The ribosome then switches to translate the ORF on the tmRNA; the nascent peptide is terminated with the 'tag peptide' encoded by the tmRNA and targeted for degradation. The ribosome is freed to recommence translation, which seems to be the essential function of trans-translation.</text>
</comment>
<comment type="subcellular location">
    <subcellularLocation>
        <location evidence="1">Cytoplasm</location>
    </subcellularLocation>
    <text evidence="1">The tmRNA-SmpB complex associates with stalled 70S ribosomes.</text>
</comment>
<comment type="similarity">
    <text evidence="1">Belongs to the SmpB family.</text>
</comment>
<organism>
    <name type="scientific">Chromohalobacter salexigens (strain ATCC BAA-138 / DSM 3043 / CIP 106854 / NCIMB 13768 / 1H11)</name>
    <dbReference type="NCBI Taxonomy" id="290398"/>
    <lineage>
        <taxon>Bacteria</taxon>
        <taxon>Pseudomonadati</taxon>
        <taxon>Pseudomonadota</taxon>
        <taxon>Gammaproteobacteria</taxon>
        <taxon>Oceanospirillales</taxon>
        <taxon>Halomonadaceae</taxon>
        <taxon>Chromohalobacter</taxon>
    </lineage>
</organism>
<proteinExistence type="inferred from homology"/>
<reference key="1">
    <citation type="journal article" date="2011" name="Stand. Genomic Sci.">
        <title>Complete genome sequence of the halophilic and highly halotolerant Chromohalobacter salexigens type strain (1H11(T)).</title>
        <authorList>
            <person name="Copeland A."/>
            <person name="O'Connor K."/>
            <person name="Lucas S."/>
            <person name="Lapidus A."/>
            <person name="Berry K.W."/>
            <person name="Detter J.C."/>
            <person name="Del Rio T.G."/>
            <person name="Hammon N."/>
            <person name="Dalin E."/>
            <person name="Tice H."/>
            <person name="Pitluck S."/>
            <person name="Bruce D."/>
            <person name="Goodwin L."/>
            <person name="Han C."/>
            <person name="Tapia R."/>
            <person name="Saunders E."/>
            <person name="Schmutz J."/>
            <person name="Brettin T."/>
            <person name="Larimer F."/>
            <person name="Land M."/>
            <person name="Hauser L."/>
            <person name="Vargas C."/>
            <person name="Nieto J.J."/>
            <person name="Kyrpides N.C."/>
            <person name="Ivanova N."/>
            <person name="Goker M."/>
            <person name="Klenk H.P."/>
            <person name="Csonka L.N."/>
            <person name="Woyke T."/>
        </authorList>
    </citation>
    <scope>NUCLEOTIDE SEQUENCE [LARGE SCALE GENOMIC DNA]</scope>
    <source>
        <strain>ATCC BAA-138 / DSM 3043 / CIP 106854 / NCIMB 13768 / 1H11</strain>
    </source>
</reference>
<sequence length="157" mass="17926">MAKKKGNLGSSTIAQNKKARFEYHIDETFEAGLSLAGWEVKSLRAGKAQLTDTYILIKNGEAWLLGSHITPLNTVSTHVVADPSRTRKLLLHRKEIAKIFSRTQDKGHTCVPLKLYWKKNLVKCELALVRGKKLHDKRATEKARDWNREKARIMRAH</sequence>
<evidence type="ECO:0000255" key="1">
    <source>
        <dbReference type="HAMAP-Rule" id="MF_00023"/>
    </source>
</evidence>
<feature type="chain" id="PRO_1000002031" description="SsrA-binding protein">
    <location>
        <begin position="1"/>
        <end position="157"/>
    </location>
</feature>
<name>SSRP_CHRSD</name>
<accession>Q1QSW3</accession>
<dbReference type="EMBL" id="CP000285">
    <property type="protein sequence ID" value="ABE60445.1"/>
    <property type="molecule type" value="Genomic_DNA"/>
</dbReference>
<dbReference type="RefSeq" id="WP_011508391.1">
    <property type="nucleotide sequence ID" value="NC_007963.1"/>
</dbReference>
<dbReference type="SMR" id="Q1QSW3"/>
<dbReference type="STRING" id="290398.Csal_3101"/>
<dbReference type="GeneID" id="95335797"/>
<dbReference type="KEGG" id="csa:Csal_3101"/>
<dbReference type="eggNOG" id="COG0691">
    <property type="taxonomic scope" value="Bacteria"/>
</dbReference>
<dbReference type="HOGENOM" id="CLU_108953_3_0_6"/>
<dbReference type="OrthoDB" id="9805462at2"/>
<dbReference type="Proteomes" id="UP000000239">
    <property type="component" value="Chromosome"/>
</dbReference>
<dbReference type="GO" id="GO:0005829">
    <property type="term" value="C:cytosol"/>
    <property type="evidence" value="ECO:0007669"/>
    <property type="project" value="TreeGrafter"/>
</dbReference>
<dbReference type="GO" id="GO:0003723">
    <property type="term" value="F:RNA binding"/>
    <property type="evidence" value="ECO:0007669"/>
    <property type="project" value="UniProtKB-UniRule"/>
</dbReference>
<dbReference type="GO" id="GO:0070929">
    <property type="term" value="P:trans-translation"/>
    <property type="evidence" value="ECO:0007669"/>
    <property type="project" value="UniProtKB-UniRule"/>
</dbReference>
<dbReference type="CDD" id="cd09294">
    <property type="entry name" value="SmpB"/>
    <property type="match status" value="1"/>
</dbReference>
<dbReference type="Gene3D" id="2.40.280.10">
    <property type="match status" value="1"/>
</dbReference>
<dbReference type="HAMAP" id="MF_00023">
    <property type="entry name" value="SmpB"/>
    <property type="match status" value="1"/>
</dbReference>
<dbReference type="InterPro" id="IPR023620">
    <property type="entry name" value="SmpB"/>
</dbReference>
<dbReference type="InterPro" id="IPR000037">
    <property type="entry name" value="SsrA-bd_prot"/>
</dbReference>
<dbReference type="InterPro" id="IPR020081">
    <property type="entry name" value="SsrA-bd_prot_CS"/>
</dbReference>
<dbReference type="NCBIfam" id="NF003843">
    <property type="entry name" value="PRK05422.1"/>
    <property type="match status" value="1"/>
</dbReference>
<dbReference type="NCBIfam" id="TIGR00086">
    <property type="entry name" value="smpB"/>
    <property type="match status" value="1"/>
</dbReference>
<dbReference type="PANTHER" id="PTHR30308:SF2">
    <property type="entry name" value="SSRA-BINDING PROTEIN"/>
    <property type="match status" value="1"/>
</dbReference>
<dbReference type="PANTHER" id="PTHR30308">
    <property type="entry name" value="TMRNA-BINDING COMPONENT OF TRANS-TRANSLATION TAGGING COMPLEX"/>
    <property type="match status" value="1"/>
</dbReference>
<dbReference type="Pfam" id="PF01668">
    <property type="entry name" value="SmpB"/>
    <property type="match status" value="1"/>
</dbReference>
<dbReference type="SUPFAM" id="SSF74982">
    <property type="entry name" value="Small protein B (SmpB)"/>
    <property type="match status" value="1"/>
</dbReference>
<dbReference type="PROSITE" id="PS01317">
    <property type="entry name" value="SSRP"/>
    <property type="match status" value="1"/>
</dbReference>
<gene>
    <name evidence="1" type="primary">smpB</name>
    <name type="ordered locus">Csal_3101</name>
</gene>
<keyword id="KW-0963">Cytoplasm</keyword>
<keyword id="KW-1185">Reference proteome</keyword>
<keyword id="KW-0694">RNA-binding</keyword>
<protein>
    <recommendedName>
        <fullName evidence="1">SsrA-binding protein</fullName>
    </recommendedName>
    <alternativeName>
        <fullName evidence="1">Small protein B</fullName>
    </alternativeName>
</protein>